<feature type="chain" id="PRO_0000146979" description="Glutamate decarboxylase alpha">
    <location>
        <begin position="1"/>
        <end position="466"/>
    </location>
</feature>
<feature type="binding site" evidence="1">
    <location>
        <position position="62"/>
    </location>
    <ligand>
        <name>substrate</name>
    </ligand>
</feature>
<feature type="binding site" evidence="1">
    <location>
        <position position="83"/>
    </location>
    <ligand>
        <name>substrate</name>
    </ligand>
</feature>
<feature type="binding site" evidence="1">
    <location>
        <begin position="126"/>
        <end position="127"/>
    </location>
    <ligand>
        <name>pyridoxal 5'-phosphate</name>
        <dbReference type="ChEBI" id="CHEBI:597326"/>
    </ligand>
</feature>
<feature type="binding site" evidence="1">
    <location>
        <position position="212"/>
    </location>
    <ligand>
        <name>pyridoxal 5'-phosphate</name>
        <dbReference type="ChEBI" id="CHEBI:597326"/>
    </ligand>
</feature>
<feature type="binding site" evidence="1">
    <location>
        <position position="275"/>
    </location>
    <ligand>
        <name>pyridoxal 5'-phosphate</name>
        <dbReference type="ChEBI" id="CHEBI:597326"/>
    </ligand>
</feature>
<feature type="modified residue" description="N6-(pyridoxal phosphate)lysine">
    <location>
        <position position="276"/>
    </location>
</feature>
<keyword id="KW-0210">Decarboxylase</keyword>
<keyword id="KW-0456">Lyase</keyword>
<keyword id="KW-0663">Pyridoxal phosphate</keyword>
<keyword id="KW-1185">Reference proteome</keyword>
<accession>P69909</accession>
<accession>P80063</accession>
<reference key="1">
    <citation type="journal article" date="2002" name="Proc. Natl. Acad. Sci. U.S.A.">
        <title>Extensive mosaic structure revealed by the complete genome sequence of uropathogenic Escherichia coli.</title>
        <authorList>
            <person name="Welch R.A."/>
            <person name="Burland V."/>
            <person name="Plunkett G. III"/>
            <person name="Redford P."/>
            <person name="Roesch P."/>
            <person name="Rasko D."/>
            <person name="Buckles E.L."/>
            <person name="Liou S.-R."/>
            <person name="Boutin A."/>
            <person name="Hackett J."/>
            <person name="Stroud D."/>
            <person name="Mayhew G.F."/>
            <person name="Rose D.J."/>
            <person name="Zhou S."/>
            <person name="Schwartz D.C."/>
            <person name="Perna N.T."/>
            <person name="Mobley H.L.T."/>
            <person name="Donnenberg M.S."/>
            <person name="Blattner F.R."/>
        </authorList>
    </citation>
    <scope>NUCLEOTIDE SEQUENCE [LARGE SCALE GENOMIC DNA]</scope>
    <source>
        <strain>CFT073 / ATCC 700928 / UPEC</strain>
    </source>
</reference>
<gene>
    <name type="primary">gadA</name>
    <name type="synonym">gadS</name>
    <name type="ordered locus">c4328</name>
</gene>
<proteinExistence type="evidence at protein level"/>
<dbReference type="EC" id="4.1.1.15"/>
<dbReference type="EMBL" id="AE014075">
    <property type="protein sequence ID" value="AAN82764.1"/>
    <property type="status" value="ALT_INIT"/>
    <property type="molecule type" value="Genomic_DNA"/>
</dbReference>
<dbReference type="RefSeq" id="WP_000372240.1">
    <property type="nucleotide sequence ID" value="NZ_CP051263.1"/>
</dbReference>
<dbReference type="SMR" id="P69909"/>
<dbReference type="STRING" id="199310.c4328"/>
<dbReference type="KEGG" id="ecc:c4328"/>
<dbReference type="eggNOG" id="COG0076">
    <property type="taxonomic scope" value="Bacteria"/>
</dbReference>
<dbReference type="HOGENOM" id="CLU_019582_2_1_6"/>
<dbReference type="Proteomes" id="UP000001410">
    <property type="component" value="Chromosome"/>
</dbReference>
<dbReference type="GO" id="GO:0005829">
    <property type="term" value="C:cytosol"/>
    <property type="evidence" value="ECO:0007669"/>
    <property type="project" value="TreeGrafter"/>
</dbReference>
<dbReference type="GO" id="GO:0004351">
    <property type="term" value="F:glutamate decarboxylase activity"/>
    <property type="evidence" value="ECO:0007669"/>
    <property type="project" value="UniProtKB-EC"/>
</dbReference>
<dbReference type="GO" id="GO:0030170">
    <property type="term" value="F:pyridoxal phosphate binding"/>
    <property type="evidence" value="ECO:0007669"/>
    <property type="project" value="InterPro"/>
</dbReference>
<dbReference type="GO" id="GO:0006538">
    <property type="term" value="P:glutamate catabolic process"/>
    <property type="evidence" value="ECO:0007669"/>
    <property type="project" value="TreeGrafter"/>
</dbReference>
<dbReference type="CDD" id="cd06450">
    <property type="entry name" value="DOPA_deC_like"/>
    <property type="match status" value="1"/>
</dbReference>
<dbReference type="FunFam" id="3.40.640.10:FF:000017">
    <property type="entry name" value="Glutamate decarboxylase"/>
    <property type="match status" value="1"/>
</dbReference>
<dbReference type="FunFam" id="3.90.1150.160:FF:000002">
    <property type="entry name" value="Glutamate decarboxylase"/>
    <property type="match status" value="1"/>
</dbReference>
<dbReference type="FunFam" id="4.10.280.50:FF:000001">
    <property type="entry name" value="Glutamate decarboxylase"/>
    <property type="match status" value="1"/>
</dbReference>
<dbReference type="Gene3D" id="3.90.1150.160">
    <property type="match status" value="1"/>
</dbReference>
<dbReference type="Gene3D" id="4.10.280.50">
    <property type="match status" value="1"/>
</dbReference>
<dbReference type="Gene3D" id="3.40.640.10">
    <property type="entry name" value="Type I PLP-dependent aspartate aminotransferase-like (Major domain)"/>
    <property type="match status" value="1"/>
</dbReference>
<dbReference type="InterPro" id="IPR010107">
    <property type="entry name" value="Glutamate_decarboxylase"/>
</dbReference>
<dbReference type="InterPro" id="IPR002129">
    <property type="entry name" value="PyrdxlP-dep_de-COase"/>
</dbReference>
<dbReference type="InterPro" id="IPR015424">
    <property type="entry name" value="PyrdxlP-dep_Trfase"/>
</dbReference>
<dbReference type="InterPro" id="IPR015421">
    <property type="entry name" value="PyrdxlP-dep_Trfase_major"/>
</dbReference>
<dbReference type="InterPro" id="IPR021115">
    <property type="entry name" value="Pyridoxal-P_BS"/>
</dbReference>
<dbReference type="NCBIfam" id="TIGR01788">
    <property type="entry name" value="Glu-decarb-GAD"/>
    <property type="match status" value="1"/>
</dbReference>
<dbReference type="PANTHER" id="PTHR43321">
    <property type="entry name" value="GLUTAMATE DECARBOXYLASE"/>
    <property type="match status" value="1"/>
</dbReference>
<dbReference type="PANTHER" id="PTHR43321:SF3">
    <property type="entry name" value="GLUTAMATE DECARBOXYLASE"/>
    <property type="match status" value="1"/>
</dbReference>
<dbReference type="Pfam" id="PF00282">
    <property type="entry name" value="Pyridoxal_deC"/>
    <property type="match status" value="1"/>
</dbReference>
<dbReference type="SUPFAM" id="SSF53383">
    <property type="entry name" value="PLP-dependent transferases"/>
    <property type="match status" value="1"/>
</dbReference>
<dbReference type="PROSITE" id="PS00392">
    <property type="entry name" value="DDC_GAD_HDC_YDC"/>
    <property type="match status" value="1"/>
</dbReference>
<evidence type="ECO:0000250" key="1"/>
<evidence type="ECO:0000305" key="2"/>
<protein>
    <recommendedName>
        <fullName>Glutamate decarboxylase alpha</fullName>
        <shortName>GAD-alpha</shortName>
        <ecNumber>4.1.1.15</ecNumber>
    </recommendedName>
</protein>
<sequence>MDQKLLTDFRSELLDSRFGAKAISTIAESKRFPLHEMRDDVAFQIINDELYLDGNARQNLATFCQTWDDENVHKLMDLSINKNWIDKEEYPQSAAIDLRCVNMVADLWHAPAPKNGQAVGTNTIGSSEACMLGGMAMKWRWRKRMEAAGKPTDKPNLVCGPVQICWHKFARYWDVELREIPMRPGQLFMDPKRMIEACDENTIGVVPTFGVTYTGNYEFPQPLHDALDKFQADTGIDIDMHIDAASGGFLAPFVAPDIVWDFRLPRVKSISASGHKFGLAPLGCGWVIWRDEEALPQELVFNVDYLGGQIGTFAINFSRPAGQVIAQYYEFLRLGREGYTKVQNASYQVAAYLADEIAKLGPYEFICTGRPDEGIPAVCFKLKDGEDPGYTLYDLSERLRLRGWQVPAFTLGGEATDIVVMRIMCRRGFEMDFAELLLEDYKASLKYLSDHPKLQGIAQQNSFKHT</sequence>
<organism>
    <name type="scientific">Escherichia coli O6:H1 (strain CFT073 / ATCC 700928 / UPEC)</name>
    <dbReference type="NCBI Taxonomy" id="199310"/>
    <lineage>
        <taxon>Bacteria</taxon>
        <taxon>Pseudomonadati</taxon>
        <taxon>Pseudomonadota</taxon>
        <taxon>Gammaproteobacteria</taxon>
        <taxon>Enterobacterales</taxon>
        <taxon>Enterobacteriaceae</taxon>
        <taxon>Escherichia</taxon>
    </lineage>
</organism>
<comment type="function">
    <text evidence="1">Converts glutamate to gamma-aminobutyrate (GABA), consuming one intracellular proton in the reaction. The gad system helps to maintain a near-neutral intracellular pH when cells are exposed to extremely acidic conditions. The ability to survive transit through the acidic conditions of the stomach is essential for successful colonization of the mammalian host by commensal and pathogenic bacteria (By similarity).</text>
</comment>
<comment type="catalytic activity">
    <reaction>
        <text>L-glutamate + H(+) = 4-aminobutanoate + CO2</text>
        <dbReference type="Rhea" id="RHEA:17785"/>
        <dbReference type="ChEBI" id="CHEBI:15378"/>
        <dbReference type="ChEBI" id="CHEBI:16526"/>
        <dbReference type="ChEBI" id="CHEBI:29985"/>
        <dbReference type="ChEBI" id="CHEBI:59888"/>
        <dbReference type="EC" id="4.1.1.15"/>
    </reaction>
</comment>
<comment type="cofactor">
    <cofactor evidence="1">
        <name>pyridoxal 5'-phosphate</name>
        <dbReference type="ChEBI" id="CHEBI:597326"/>
    </cofactor>
</comment>
<comment type="subunit">
    <text evidence="1">Homohexamer.</text>
</comment>
<comment type="induction">
    <text evidence="1">By acidic conditions. Expression is regulated by a complex system involving RpoS, cAMP, CRP, EvgAS, H-NS, GadE, GadW and GadX. The level of involvement for each regulator varies depending upon the growth phase and the medium (By similarity).</text>
</comment>
<comment type="similarity">
    <text evidence="2">Belongs to the group II decarboxylase family.</text>
</comment>
<comment type="sequence caution" evidence="2">
    <conflict type="erroneous initiation">
        <sequence resource="EMBL-CDS" id="AAN82764"/>
    </conflict>
</comment>
<name>DCEA_ECOL6</name>